<protein>
    <recommendedName>
        <fullName evidence="1">Protein GrpE</fullName>
    </recommendedName>
    <alternativeName>
        <fullName evidence="1">HSP-70 cofactor</fullName>
    </alternativeName>
</protein>
<evidence type="ECO:0000255" key="1">
    <source>
        <dbReference type="HAMAP-Rule" id="MF_01151"/>
    </source>
</evidence>
<evidence type="ECO:0000256" key="2">
    <source>
        <dbReference type="SAM" id="MobiDB-lite"/>
    </source>
</evidence>
<dbReference type="EMBL" id="BA000045">
    <property type="protein sequence ID" value="BAC92135.1"/>
    <property type="molecule type" value="Genomic_DNA"/>
</dbReference>
<dbReference type="RefSeq" id="NP_927140.1">
    <property type="nucleotide sequence ID" value="NC_005125.1"/>
</dbReference>
<dbReference type="RefSeq" id="WP_011144178.1">
    <property type="nucleotide sequence ID" value="NC_005125.1"/>
</dbReference>
<dbReference type="SMR" id="Q7NDP1"/>
<dbReference type="FunCoup" id="Q7NDP1">
    <property type="interactions" value="268"/>
</dbReference>
<dbReference type="STRING" id="251221.gene:10761713"/>
<dbReference type="EnsemblBacteria" id="BAC92135">
    <property type="protein sequence ID" value="BAC92135"/>
    <property type="gene ID" value="BAC92135"/>
</dbReference>
<dbReference type="KEGG" id="gvi:gll4194"/>
<dbReference type="PATRIC" id="fig|251221.4.peg.4226"/>
<dbReference type="eggNOG" id="COG0576">
    <property type="taxonomic scope" value="Bacteria"/>
</dbReference>
<dbReference type="HOGENOM" id="CLU_057217_5_1_3"/>
<dbReference type="InParanoid" id="Q7NDP1"/>
<dbReference type="OrthoDB" id="9812586at2"/>
<dbReference type="PhylomeDB" id="Q7NDP1"/>
<dbReference type="Proteomes" id="UP000000557">
    <property type="component" value="Chromosome"/>
</dbReference>
<dbReference type="GO" id="GO:0005737">
    <property type="term" value="C:cytoplasm"/>
    <property type="evidence" value="ECO:0007669"/>
    <property type="project" value="UniProtKB-SubCell"/>
</dbReference>
<dbReference type="GO" id="GO:0000774">
    <property type="term" value="F:adenyl-nucleotide exchange factor activity"/>
    <property type="evidence" value="ECO:0000318"/>
    <property type="project" value="GO_Central"/>
</dbReference>
<dbReference type="GO" id="GO:0042803">
    <property type="term" value="F:protein homodimerization activity"/>
    <property type="evidence" value="ECO:0007669"/>
    <property type="project" value="InterPro"/>
</dbReference>
<dbReference type="GO" id="GO:0051087">
    <property type="term" value="F:protein-folding chaperone binding"/>
    <property type="evidence" value="ECO:0007669"/>
    <property type="project" value="InterPro"/>
</dbReference>
<dbReference type="GO" id="GO:0051082">
    <property type="term" value="F:unfolded protein binding"/>
    <property type="evidence" value="ECO:0000318"/>
    <property type="project" value="GO_Central"/>
</dbReference>
<dbReference type="GO" id="GO:0006457">
    <property type="term" value="P:protein folding"/>
    <property type="evidence" value="ECO:0007669"/>
    <property type="project" value="InterPro"/>
</dbReference>
<dbReference type="CDD" id="cd00446">
    <property type="entry name" value="GrpE"/>
    <property type="match status" value="1"/>
</dbReference>
<dbReference type="FunFam" id="2.30.22.10:FF:000001">
    <property type="entry name" value="Protein GrpE"/>
    <property type="match status" value="1"/>
</dbReference>
<dbReference type="Gene3D" id="3.90.20.20">
    <property type="match status" value="1"/>
</dbReference>
<dbReference type="Gene3D" id="2.30.22.10">
    <property type="entry name" value="Head domain of nucleotide exchange factor GrpE"/>
    <property type="match status" value="1"/>
</dbReference>
<dbReference type="HAMAP" id="MF_01151">
    <property type="entry name" value="GrpE"/>
    <property type="match status" value="1"/>
</dbReference>
<dbReference type="InterPro" id="IPR000740">
    <property type="entry name" value="GrpE"/>
</dbReference>
<dbReference type="InterPro" id="IPR013805">
    <property type="entry name" value="GrpE_coiled_coil"/>
</dbReference>
<dbReference type="InterPro" id="IPR009012">
    <property type="entry name" value="GrpE_head"/>
</dbReference>
<dbReference type="NCBIfam" id="NF010738">
    <property type="entry name" value="PRK14140.1"/>
    <property type="match status" value="1"/>
</dbReference>
<dbReference type="NCBIfam" id="NF010741">
    <property type="entry name" value="PRK14143.1"/>
    <property type="match status" value="1"/>
</dbReference>
<dbReference type="PANTHER" id="PTHR21237:SF40">
    <property type="entry name" value="CELL CYCLE AND APOPTOSIS REGULATOR PROTEIN 2"/>
    <property type="match status" value="1"/>
</dbReference>
<dbReference type="PANTHER" id="PTHR21237">
    <property type="entry name" value="GRPE PROTEIN"/>
    <property type="match status" value="1"/>
</dbReference>
<dbReference type="Pfam" id="PF01025">
    <property type="entry name" value="GrpE"/>
    <property type="match status" value="1"/>
</dbReference>
<dbReference type="PRINTS" id="PR00773">
    <property type="entry name" value="GRPEPROTEIN"/>
</dbReference>
<dbReference type="SUPFAM" id="SSF58014">
    <property type="entry name" value="Coiled-coil domain of nucleotide exchange factor GrpE"/>
    <property type="match status" value="1"/>
</dbReference>
<dbReference type="SUPFAM" id="SSF51064">
    <property type="entry name" value="Head domain of nucleotide exchange factor GrpE"/>
    <property type="match status" value="1"/>
</dbReference>
<dbReference type="PROSITE" id="PS01071">
    <property type="entry name" value="GRPE"/>
    <property type="match status" value="1"/>
</dbReference>
<gene>
    <name evidence="1" type="primary">grpE</name>
    <name type="ordered locus">gll4194</name>
</gene>
<keyword id="KW-0143">Chaperone</keyword>
<keyword id="KW-0963">Cytoplasm</keyword>
<keyword id="KW-1185">Reference proteome</keyword>
<keyword id="KW-0346">Stress response</keyword>
<organism>
    <name type="scientific">Gloeobacter violaceus (strain ATCC 29082 / PCC 7421)</name>
    <dbReference type="NCBI Taxonomy" id="251221"/>
    <lineage>
        <taxon>Bacteria</taxon>
        <taxon>Bacillati</taxon>
        <taxon>Cyanobacteriota</taxon>
        <taxon>Cyanophyceae</taxon>
        <taxon>Gloeobacterales</taxon>
        <taxon>Gloeobacteraceae</taxon>
        <taxon>Gloeobacter</taxon>
    </lineage>
</organism>
<sequence>MAENERTTENFQPQDPSYAEAATTEASAAEATGFIARIDQLAAENSDLQKKLADYEQKYTRLMADFDNFRKRTQREKDELAYFVSAKLLKDILPVFDNFDRARAFAQPDNEREEKLHNSYQQVYRQFLSVLEKMGVTAMEAIGQPFDPAQHEAILREESAGVSQETVVAELQKGYLLADKVLRPAMVKVAIPEAGS</sequence>
<accession>Q7NDP1</accession>
<reference key="1">
    <citation type="journal article" date="2003" name="DNA Res.">
        <title>Complete genome structure of Gloeobacter violaceus PCC 7421, a cyanobacterium that lacks thylakoids.</title>
        <authorList>
            <person name="Nakamura Y."/>
            <person name="Kaneko T."/>
            <person name="Sato S."/>
            <person name="Mimuro M."/>
            <person name="Miyashita H."/>
            <person name="Tsuchiya T."/>
            <person name="Sasamoto S."/>
            <person name="Watanabe A."/>
            <person name="Kawashima K."/>
            <person name="Kishida Y."/>
            <person name="Kiyokawa C."/>
            <person name="Kohara M."/>
            <person name="Matsumoto M."/>
            <person name="Matsuno A."/>
            <person name="Nakazaki N."/>
            <person name="Shimpo S."/>
            <person name="Takeuchi C."/>
            <person name="Yamada M."/>
            <person name="Tabata S."/>
        </authorList>
    </citation>
    <scope>NUCLEOTIDE SEQUENCE [LARGE SCALE GENOMIC DNA]</scope>
    <source>
        <strain>ATCC 29082 / PCC 7421</strain>
    </source>
</reference>
<comment type="function">
    <text evidence="1">Participates actively in the response to hyperosmotic and heat shock by preventing the aggregation of stress-denatured proteins, in association with DnaK and GrpE. It is the nucleotide exchange factor for DnaK and may function as a thermosensor. Unfolded proteins bind initially to DnaJ; upon interaction with the DnaJ-bound protein, DnaK hydrolyzes its bound ATP, resulting in the formation of a stable complex. GrpE releases ADP from DnaK; ATP binding to DnaK triggers the release of the substrate protein, thus completing the reaction cycle. Several rounds of ATP-dependent interactions between DnaJ, DnaK and GrpE are required for fully efficient folding.</text>
</comment>
<comment type="subunit">
    <text evidence="1">Homodimer.</text>
</comment>
<comment type="subcellular location">
    <subcellularLocation>
        <location evidence="1">Cytoplasm</location>
    </subcellularLocation>
</comment>
<comment type="similarity">
    <text evidence="1">Belongs to the GrpE family.</text>
</comment>
<name>GRPE_GLOVI</name>
<proteinExistence type="inferred from homology"/>
<feature type="chain" id="PRO_0000113791" description="Protein GrpE">
    <location>
        <begin position="1"/>
        <end position="196"/>
    </location>
</feature>
<feature type="region of interest" description="Disordered" evidence="2">
    <location>
        <begin position="1"/>
        <end position="24"/>
    </location>
</feature>